<dbReference type="EMBL" id="AK053419">
    <property type="protein sequence ID" value="BAC35379.1"/>
    <property type="molecule type" value="mRNA"/>
</dbReference>
<dbReference type="EMBL" id="AK078439">
    <property type="protein sequence ID" value="BAC37274.1"/>
    <property type="molecule type" value="mRNA"/>
</dbReference>
<dbReference type="CCDS" id="CCDS57263.1">
    <molecule id="Q8BKE5-1"/>
</dbReference>
<dbReference type="RefSeq" id="NP_001243071.1">
    <molecule id="Q8BKE5-1"/>
    <property type="nucleotide sequence ID" value="NM_001256142.1"/>
</dbReference>
<dbReference type="SMR" id="Q8BKE5"/>
<dbReference type="BioGRID" id="550136">
    <property type="interactions" value="4"/>
</dbReference>
<dbReference type="FunCoup" id="Q8BKE5">
    <property type="interactions" value="1479"/>
</dbReference>
<dbReference type="STRING" id="10090.ENSMUSP00000137082"/>
<dbReference type="iPTMnet" id="Q8BKE5"/>
<dbReference type="PhosphoSitePlus" id="Q8BKE5"/>
<dbReference type="PaxDb" id="10090-ENSMUSP00000137082"/>
<dbReference type="Antibodypedia" id="65416">
    <property type="antibodies" value="55 antibodies from 17 providers"/>
</dbReference>
<dbReference type="Ensembl" id="ENSMUST00000180239.2">
    <molecule id="Q8BKE5-1"/>
    <property type="protein sequence ID" value="ENSMUSP00000137082.2"/>
    <property type="gene ID" value="ENSMUSG00000094595.2"/>
</dbReference>
<dbReference type="GeneID" id="100503583"/>
<dbReference type="KEGG" id="mmu:100503583"/>
<dbReference type="UCSC" id="uc008rzt.2">
    <molecule id="Q8BKE5-1"/>
    <property type="organism name" value="mouse"/>
</dbReference>
<dbReference type="AGR" id="MGI:5301008"/>
<dbReference type="CTD" id="100861412"/>
<dbReference type="CTD" id="25788"/>
<dbReference type="MGI" id="MGI:5301008">
    <property type="gene designation" value="Fsbp"/>
</dbReference>
<dbReference type="VEuPathDB" id="HostDB:ENSMUSG00000094595"/>
<dbReference type="eggNOG" id="ENOG502QUKT">
    <property type="taxonomic scope" value="Eukaryota"/>
</dbReference>
<dbReference type="GeneTree" id="ENSGT00390000008778"/>
<dbReference type="HOGENOM" id="CLU_080744_0_0_1"/>
<dbReference type="InParanoid" id="Q8BKE5"/>
<dbReference type="OMA" id="ERNNLPC"/>
<dbReference type="OrthoDB" id="413460at2759"/>
<dbReference type="PhylomeDB" id="Q8BKE5"/>
<dbReference type="TreeFam" id="TF331896"/>
<dbReference type="BioGRID-ORCS" id="100503583">
    <property type="hits" value="4 hits in 77 CRISPR screens"/>
</dbReference>
<dbReference type="BioGRID-ORCS" id="623474">
    <property type="hits" value="3 hits in 117 CRISPR screens"/>
</dbReference>
<dbReference type="PRO" id="PR:Q8BKE5"/>
<dbReference type="Proteomes" id="UP000000589">
    <property type="component" value="Chromosome 4"/>
</dbReference>
<dbReference type="RNAct" id="Q8BKE5">
    <property type="molecule type" value="protein"/>
</dbReference>
<dbReference type="Bgee" id="ENSMUSG00000094595">
    <property type="expression patterns" value="Expressed in retinal neural layer and 51 other cell types or tissues"/>
</dbReference>
<dbReference type="GO" id="GO:0005654">
    <property type="term" value="C:nucleoplasm"/>
    <property type="evidence" value="ECO:0007669"/>
    <property type="project" value="Ensembl"/>
</dbReference>
<dbReference type="GO" id="GO:0042802">
    <property type="term" value="F:identical protein binding"/>
    <property type="evidence" value="ECO:0007669"/>
    <property type="project" value="Ensembl"/>
</dbReference>
<dbReference type="InterPro" id="IPR042383">
    <property type="entry name" value="FSBP"/>
</dbReference>
<dbReference type="InterPro" id="IPR028002">
    <property type="entry name" value="Myb_DNA-bind_5"/>
</dbReference>
<dbReference type="PANTHER" id="PTHR15386">
    <property type="entry name" value="FIBRINOGEN SILENCER-BINDING PROTEIN"/>
    <property type="match status" value="1"/>
</dbReference>
<dbReference type="PANTHER" id="PTHR15386:SF0">
    <property type="entry name" value="FIBRINOGEN SILENCER-BINDING PROTEIN"/>
    <property type="match status" value="1"/>
</dbReference>
<dbReference type="Pfam" id="PF13873">
    <property type="entry name" value="Myb_DNA-bind_5"/>
    <property type="match status" value="1"/>
</dbReference>
<evidence type="ECO:0000250" key="1"/>
<evidence type="ECO:0000250" key="2">
    <source>
        <dbReference type="UniProtKB" id="O95073"/>
    </source>
</evidence>
<evidence type="ECO:0000256" key="3">
    <source>
        <dbReference type="SAM" id="MobiDB-lite"/>
    </source>
</evidence>
<evidence type="ECO:0000303" key="4">
    <source>
    </source>
</evidence>
<gene>
    <name type="primary">Fsbp</name>
</gene>
<comment type="function">
    <text evidence="1">Transcriptional repressor that down-regulates the expression of the fibrinogen gamma chain. Represses transcription of GSK3B gene promoter via its interaction with APBA1.</text>
</comment>
<comment type="subunit">
    <text evidence="1">Interacts with APBA1 (via PDZ 1 and 2 domains).</text>
</comment>
<comment type="subcellular location">
    <subcellularLocation>
        <location evidence="1">Nucleus</location>
    </subcellularLocation>
</comment>
<comment type="alternative products">
    <event type="alternative splicing"/>
    <isoform>
        <id>Q8BKE5-1</id>
        <name>1</name>
        <sequence type="displayed"/>
    </isoform>
    <isoform>
        <id>Q8BKE5-2</id>
        <name>2</name>
        <sequence type="described" ref="VSP_010775"/>
    </isoform>
</comment>
<name>FSBP_MOUSE</name>
<accession>Q8BKE5</accession>
<accession>Q8BJX8</accession>
<protein>
    <recommendedName>
        <fullName>Fibrinogen silencer-binding protein</fullName>
    </recommendedName>
</protein>
<sequence length="299" mass="34403">MVGKARSSNFTLSEKLDLLNLVKPYVKILEEHTNKNSVIVEKNRCWDVIAVNYNAIGVDRPPRTAQGLRSLYKRLKEYAKQELLQQKEAQSEFKSSVSEPTKQVMEMIPQIASFGLIRDRSHIQSANLDETAQAGTSSLQVMVDHHPVAITVEVKQEEDIKPSPPLVSNPQLSDTLEQREEHELMHVVEGSESPSLSSVDMRMTSSPSSVPRRDEIFHQESGEHFRSLLRCDPQVLQMLKEEHQIILENQKNFGLYVQEKRDGLRRRQRLEEELLRAKIEVEKLKATRLRRDLPEYSSL</sequence>
<proteinExistence type="evidence at transcript level"/>
<reference key="1">
    <citation type="journal article" date="2005" name="Science">
        <title>The transcriptional landscape of the mammalian genome.</title>
        <authorList>
            <person name="Carninci P."/>
            <person name="Kasukawa T."/>
            <person name="Katayama S."/>
            <person name="Gough J."/>
            <person name="Frith M.C."/>
            <person name="Maeda N."/>
            <person name="Oyama R."/>
            <person name="Ravasi T."/>
            <person name="Lenhard B."/>
            <person name="Wells C."/>
            <person name="Kodzius R."/>
            <person name="Shimokawa K."/>
            <person name="Bajic V.B."/>
            <person name="Brenner S.E."/>
            <person name="Batalov S."/>
            <person name="Forrest A.R."/>
            <person name="Zavolan M."/>
            <person name="Davis M.J."/>
            <person name="Wilming L.G."/>
            <person name="Aidinis V."/>
            <person name="Allen J.E."/>
            <person name="Ambesi-Impiombato A."/>
            <person name="Apweiler R."/>
            <person name="Aturaliya R.N."/>
            <person name="Bailey T.L."/>
            <person name="Bansal M."/>
            <person name="Baxter L."/>
            <person name="Beisel K.W."/>
            <person name="Bersano T."/>
            <person name="Bono H."/>
            <person name="Chalk A.M."/>
            <person name="Chiu K.P."/>
            <person name="Choudhary V."/>
            <person name="Christoffels A."/>
            <person name="Clutterbuck D.R."/>
            <person name="Crowe M.L."/>
            <person name="Dalla E."/>
            <person name="Dalrymple B.P."/>
            <person name="de Bono B."/>
            <person name="Della Gatta G."/>
            <person name="di Bernardo D."/>
            <person name="Down T."/>
            <person name="Engstrom P."/>
            <person name="Fagiolini M."/>
            <person name="Faulkner G."/>
            <person name="Fletcher C.F."/>
            <person name="Fukushima T."/>
            <person name="Furuno M."/>
            <person name="Futaki S."/>
            <person name="Gariboldi M."/>
            <person name="Georgii-Hemming P."/>
            <person name="Gingeras T.R."/>
            <person name="Gojobori T."/>
            <person name="Green R.E."/>
            <person name="Gustincich S."/>
            <person name="Harbers M."/>
            <person name="Hayashi Y."/>
            <person name="Hensch T.K."/>
            <person name="Hirokawa N."/>
            <person name="Hill D."/>
            <person name="Huminiecki L."/>
            <person name="Iacono M."/>
            <person name="Ikeo K."/>
            <person name="Iwama A."/>
            <person name="Ishikawa T."/>
            <person name="Jakt M."/>
            <person name="Kanapin A."/>
            <person name="Katoh M."/>
            <person name="Kawasawa Y."/>
            <person name="Kelso J."/>
            <person name="Kitamura H."/>
            <person name="Kitano H."/>
            <person name="Kollias G."/>
            <person name="Krishnan S.P."/>
            <person name="Kruger A."/>
            <person name="Kummerfeld S.K."/>
            <person name="Kurochkin I.V."/>
            <person name="Lareau L.F."/>
            <person name="Lazarevic D."/>
            <person name="Lipovich L."/>
            <person name="Liu J."/>
            <person name="Liuni S."/>
            <person name="McWilliam S."/>
            <person name="Madan Babu M."/>
            <person name="Madera M."/>
            <person name="Marchionni L."/>
            <person name="Matsuda H."/>
            <person name="Matsuzawa S."/>
            <person name="Miki H."/>
            <person name="Mignone F."/>
            <person name="Miyake S."/>
            <person name="Morris K."/>
            <person name="Mottagui-Tabar S."/>
            <person name="Mulder N."/>
            <person name="Nakano N."/>
            <person name="Nakauchi H."/>
            <person name="Ng P."/>
            <person name="Nilsson R."/>
            <person name="Nishiguchi S."/>
            <person name="Nishikawa S."/>
            <person name="Nori F."/>
            <person name="Ohara O."/>
            <person name="Okazaki Y."/>
            <person name="Orlando V."/>
            <person name="Pang K.C."/>
            <person name="Pavan W.J."/>
            <person name="Pavesi G."/>
            <person name="Pesole G."/>
            <person name="Petrovsky N."/>
            <person name="Piazza S."/>
            <person name="Reed J."/>
            <person name="Reid J.F."/>
            <person name="Ring B.Z."/>
            <person name="Ringwald M."/>
            <person name="Rost B."/>
            <person name="Ruan Y."/>
            <person name="Salzberg S.L."/>
            <person name="Sandelin A."/>
            <person name="Schneider C."/>
            <person name="Schoenbach C."/>
            <person name="Sekiguchi K."/>
            <person name="Semple C.A."/>
            <person name="Seno S."/>
            <person name="Sessa L."/>
            <person name="Sheng Y."/>
            <person name="Shibata Y."/>
            <person name="Shimada H."/>
            <person name="Shimada K."/>
            <person name="Silva D."/>
            <person name="Sinclair B."/>
            <person name="Sperling S."/>
            <person name="Stupka E."/>
            <person name="Sugiura K."/>
            <person name="Sultana R."/>
            <person name="Takenaka Y."/>
            <person name="Taki K."/>
            <person name="Tammoja K."/>
            <person name="Tan S.L."/>
            <person name="Tang S."/>
            <person name="Taylor M.S."/>
            <person name="Tegner J."/>
            <person name="Teichmann S.A."/>
            <person name="Ueda H.R."/>
            <person name="van Nimwegen E."/>
            <person name="Verardo R."/>
            <person name="Wei C.L."/>
            <person name="Yagi K."/>
            <person name="Yamanishi H."/>
            <person name="Zabarovsky E."/>
            <person name="Zhu S."/>
            <person name="Zimmer A."/>
            <person name="Hide W."/>
            <person name="Bult C."/>
            <person name="Grimmond S.M."/>
            <person name="Teasdale R.D."/>
            <person name="Liu E.T."/>
            <person name="Brusic V."/>
            <person name="Quackenbush J."/>
            <person name="Wahlestedt C."/>
            <person name="Mattick J.S."/>
            <person name="Hume D.A."/>
            <person name="Kai C."/>
            <person name="Sasaki D."/>
            <person name="Tomaru Y."/>
            <person name="Fukuda S."/>
            <person name="Kanamori-Katayama M."/>
            <person name="Suzuki M."/>
            <person name="Aoki J."/>
            <person name="Arakawa T."/>
            <person name="Iida J."/>
            <person name="Imamura K."/>
            <person name="Itoh M."/>
            <person name="Kato T."/>
            <person name="Kawaji H."/>
            <person name="Kawagashira N."/>
            <person name="Kawashima T."/>
            <person name="Kojima M."/>
            <person name="Kondo S."/>
            <person name="Konno H."/>
            <person name="Nakano K."/>
            <person name="Ninomiya N."/>
            <person name="Nishio T."/>
            <person name="Okada M."/>
            <person name="Plessy C."/>
            <person name="Shibata K."/>
            <person name="Shiraki T."/>
            <person name="Suzuki S."/>
            <person name="Tagami M."/>
            <person name="Waki K."/>
            <person name="Watahiki A."/>
            <person name="Okamura-Oho Y."/>
            <person name="Suzuki H."/>
            <person name="Kawai J."/>
            <person name="Hayashizaki Y."/>
        </authorList>
    </citation>
    <scope>NUCLEOTIDE SEQUENCE [LARGE SCALE MRNA] (ISOFORMS 1 AND 2)</scope>
    <source>
        <strain>C57BL/6J</strain>
        <tissue>Eye</tissue>
        <tissue>Mesonephros</tissue>
    </source>
</reference>
<organism>
    <name type="scientific">Mus musculus</name>
    <name type="common">Mouse</name>
    <dbReference type="NCBI Taxonomy" id="10090"/>
    <lineage>
        <taxon>Eukaryota</taxon>
        <taxon>Metazoa</taxon>
        <taxon>Chordata</taxon>
        <taxon>Craniata</taxon>
        <taxon>Vertebrata</taxon>
        <taxon>Euteleostomi</taxon>
        <taxon>Mammalia</taxon>
        <taxon>Eutheria</taxon>
        <taxon>Euarchontoglires</taxon>
        <taxon>Glires</taxon>
        <taxon>Rodentia</taxon>
        <taxon>Myomorpha</taxon>
        <taxon>Muroidea</taxon>
        <taxon>Muridae</taxon>
        <taxon>Murinae</taxon>
        <taxon>Mus</taxon>
        <taxon>Mus</taxon>
    </lineage>
</organism>
<keyword id="KW-0025">Alternative splicing</keyword>
<keyword id="KW-1017">Isopeptide bond</keyword>
<keyword id="KW-0539">Nucleus</keyword>
<keyword id="KW-1185">Reference proteome</keyword>
<keyword id="KW-0678">Repressor</keyword>
<keyword id="KW-0804">Transcription</keyword>
<keyword id="KW-0805">Transcription regulation</keyword>
<keyword id="KW-0832">Ubl conjugation</keyword>
<feature type="chain" id="PRO_0000087353" description="Fibrinogen silencer-binding protein">
    <location>
        <begin position="1"/>
        <end position="299"/>
    </location>
</feature>
<feature type="region of interest" description="Disordered" evidence="3">
    <location>
        <begin position="189"/>
        <end position="211"/>
    </location>
</feature>
<feature type="compositionally biased region" description="Polar residues" evidence="3">
    <location>
        <begin position="192"/>
        <end position="209"/>
    </location>
</feature>
<feature type="cross-link" description="Glycyl lysine isopeptide (Lys-Gly) (interchain with G-Cter in SUMO2)" evidence="2">
    <location>
        <position position="94"/>
    </location>
</feature>
<feature type="splice variant" id="VSP_010775" description="In isoform 2." evidence="4">
    <location>
        <begin position="1"/>
        <end position="141"/>
    </location>
</feature>